<keyword id="KW-0067">ATP-binding</keyword>
<keyword id="KW-0347">Helicase</keyword>
<keyword id="KW-0378">Hydrolase</keyword>
<keyword id="KW-0547">Nucleotide-binding</keyword>
<keyword id="KW-0597">Phosphoprotein</keyword>
<keyword id="KW-1185">Reference proteome</keyword>
<keyword id="KW-0694">RNA-binding</keyword>
<reference key="1">
    <citation type="journal article" date="1999" name="Nature">
        <title>Sequence and analysis of chromosome 2 of the plant Arabidopsis thaliana.</title>
        <authorList>
            <person name="Lin X."/>
            <person name="Kaul S."/>
            <person name="Rounsley S.D."/>
            <person name="Shea T.P."/>
            <person name="Benito M.-I."/>
            <person name="Town C.D."/>
            <person name="Fujii C.Y."/>
            <person name="Mason T.M."/>
            <person name="Bowman C.L."/>
            <person name="Barnstead M.E."/>
            <person name="Feldblyum T.V."/>
            <person name="Buell C.R."/>
            <person name="Ketchum K.A."/>
            <person name="Lee J.J."/>
            <person name="Ronning C.M."/>
            <person name="Koo H.L."/>
            <person name="Moffat K.S."/>
            <person name="Cronin L.A."/>
            <person name="Shen M."/>
            <person name="Pai G."/>
            <person name="Van Aken S."/>
            <person name="Umayam L."/>
            <person name="Tallon L.J."/>
            <person name="Gill J.E."/>
            <person name="Adams M.D."/>
            <person name="Carrera A.J."/>
            <person name="Creasy T.H."/>
            <person name="Goodman H.M."/>
            <person name="Somerville C.R."/>
            <person name="Copenhaver G.P."/>
            <person name="Preuss D."/>
            <person name="Nierman W.C."/>
            <person name="White O."/>
            <person name="Eisen J.A."/>
            <person name="Salzberg S.L."/>
            <person name="Fraser C.M."/>
            <person name="Venter J.C."/>
        </authorList>
    </citation>
    <scope>NUCLEOTIDE SEQUENCE [LARGE SCALE GENOMIC DNA]</scope>
    <source>
        <strain>cv. Columbia</strain>
    </source>
</reference>
<reference key="2">
    <citation type="journal article" date="2017" name="Plant J.">
        <title>Araport11: a complete reannotation of the Arabidopsis thaliana reference genome.</title>
        <authorList>
            <person name="Cheng C.Y."/>
            <person name="Krishnakumar V."/>
            <person name="Chan A.P."/>
            <person name="Thibaud-Nissen F."/>
            <person name="Schobel S."/>
            <person name="Town C.D."/>
        </authorList>
    </citation>
    <scope>GENOME REANNOTATION</scope>
    <source>
        <strain>cv. Columbia</strain>
    </source>
</reference>
<reference key="3">
    <citation type="journal article" date="2003" name="Science">
        <title>Empirical analysis of transcriptional activity in the Arabidopsis genome.</title>
        <authorList>
            <person name="Yamada K."/>
            <person name="Lim J."/>
            <person name="Dale J.M."/>
            <person name="Chen H."/>
            <person name="Shinn P."/>
            <person name="Palm C.J."/>
            <person name="Southwick A.M."/>
            <person name="Wu H.C."/>
            <person name="Kim C.J."/>
            <person name="Nguyen M."/>
            <person name="Pham P.K."/>
            <person name="Cheuk R.F."/>
            <person name="Karlin-Newmann G."/>
            <person name="Liu S.X."/>
            <person name="Lam B."/>
            <person name="Sakano H."/>
            <person name="Wu T."/>
            <person name="Yu G."/>
            <person name="Miranda M."/>
            <person name="Quach H.L."/>
            <person name="Tripp M."/>
            <person name="Chang C.H."/>
            <person name="Lee J.M."/>
            <person name="Toriumi M.J."/>
            <person name="Chan M.M."/>
            <person name="Tang C.C."/>
            <person name="Onodera C.S."/>
            <person name="Deng J.M."/>
            <person name="Akiyama K."/>
            <person name="Ansari Y."/>
            <person name="Arakawa T."/>
            <person name="Banh J."/>
            <person name="Banno F."/>
            <person name="Bowser L."/>
            <person name="Brooks S.Y."/>
            <person name="Carninci P."/>
            <person name="Chao Q."/>
            <person name="Choy N."/>
            <person name="Enju A."/>
            <person name="Goldsmith A.D."/>
            <person name="Gurjal M."/>
            <person name="Hansen N.F."/>
            <person name="Hayashizaki Y."/>
            <person name="Johnson-Hopson C."/>
            <person name="Hsuan V.W."/>
            <person name="Iida K."/>
            <person name="Karnes M."/>
            <person name="Khan S."/>
            <person name="Koesema E."/>
            <person name="Ishida J."/>
            <person name="Jiang P.X."/>
            <person name="Jones T."/>
            <person name="Kawai J."/>
            <person name="Kamiya A."/>
            <person name="Meyers C."/>
            <person name="Nakajima M."/>
            <person name="Narusaka M."/>
            <person name="Seki M."/>
            <person name="Sakurai T."/>
            <person name="Satou M."/>
            <person name="Tamse R."/>
            <person name="Vaysberg M."/>
            <person name="Wallender E.K."/>
            <person name="Wong C."/>
            <person name="Yamamura Y."/>
            <person name="Yuan S."/>
            <person name="Shinozaki K."/>
            <person name="Davis R.W."/>
            <person name="Theologis A."/>
            <person name="Ecker J.R."/>
        </authorList>
    </citation>
    <scope>NUCLEOTIDE SEQUENCE [LARGE SCALE MRNA]</scope>
    <source>
        <strain>cv. Columbia</strain>
    </source>
</reference>
<reference key="4">
    <citation type="journal article" date="2004" name="Plant Biotechnol. J.">
        <title>DEAD-box RNA helicases in Arabidopsis thaliana: establishing a link between quantitative expression, gene structure and evolution of a family of genes.</title>
        <authorList>
            <person name="Mingam A."/>
            <person name="Toffano-Nioche C."/>
            <person name="Brunaud V."/>
            <person name="Boudet N."/>
            <person name="Kreis M."/>
            <person name="Lecharny A."/>
        </authorList>
    </citation>
    <scope>GENE FAMILY</scope>
    <scope>NOMENCLATURE</scope>
</reference>
<reference key="5">
    <citation type="journal article" date="2009" name="J. Proteomics">
        <title>Phosphoproteomic analysis of nuclei-enriched fractions from Arabidopsis thaliana.</title>
        <authorList>
            <person name="Jones A.M.E."/>
            <person name="MacLean D."/>
            <person name="Studholme D.J."/>
            <person name="Serna-Sanz A."/>
            <person name="Andreasson E."/>
            <person name="Rathjen J.P."/>
            <person name="Peck S.C."/>
        </authorList>
    </citation>
    <scope>IDENTIFICATION BY MASS SPECTROMETRY [LARGE SCALE ANALYSIS]</scope>
    <source>
        <strain>cv. Columbia</strain>
    </source>
</reference>
<reference key="6">
    <citation type="journal article" date="2009" name="Plant Physiol.">
        <title>Large-scale Arabidopsis phosphoproteome profiling reveals novel chloroplast kinase substrates and phosphorylation networks.</title>
        <authorList>
            <person name="Reiland S."/>
            <person name="Messerli G."/>
            <person name="Baerenfaller K."/>
            <person name="Gerrits B."/>
            <person name="Endler A."/>
            <person name="Grossmann J."/>
            <person name="Gruissem W."/>
            <person name="Baginsky S."/>
        </authorList>
    </citation>
    <scope>PHOSPHORYLATION [LARGE SCALE ANALYSIS] AT SER-160</scope>
    <scope>IDENTIFICATION BY MASS SPECTROMETRY [LARGE SCALE ANALYSIS]</scope>
</reference>
<reference key="7">
    <citation type="journal article" date="2013" name="PLoS ONE">
        <title>Genome-wide comparative in silico analysis of the RNA helicase gene family in Zea mays and Glycine max: a comparison with Arabidopsis and Oryza sativa.</title>
        <authorList>
            <person name="Xu R."/>
            <person name="Zhang S."/>
            <person name="Huang J."/>
            <person name="Zheng C."/>
        </authorList>
    </citation>
    <scope>GENE FAMILY</scope>
</reference>
<feature type="chain" id="PRO_0000239164" description="DEAD-box ATP-dependent RNA helicase 24">
    <location>
        <begin position="1"/>
        <end position="760"/>
    </location>
</feature>
<feature type="domain" description="Helicase ATP-binding" evidence="1">
    <location>
        <begin position="259"/>
        <end position="434"/>
    </location>
</feature>
<feature type="domain" description="Helicase C-terminal" evidence="2">
    <location>
        <begin position="459"/>
        <end position="608"/>
    </location>
</feature>
<feature type="region of interest" description="Disordered" evidence="3">
    <location>
        <begin position="1"/>
        <end position="76"/>
    </location>
</feature>
<feature type="region of interest" description="Disordered" evidence="3">
    <location>
        <begin position="90"/>
        <end position="113"/>
    </location>
</feature>
<feature type="region of interest" description="Disordered" evidence="3">
    <location>
        <begin position="604"/>
        <end position="638"/>
    </location>
</feature>
<feature type="region of interest" description="Disordered" evidence="3">
    <location>
        <begin position="647"/>
        <end position="666"/>
    </location>
</feature>
<feature type="region of interest" description="Disordered" evidence="3">
    <location>
        <begin position="706"/>
        <end position="760"/>
    </location>
</feature>
<feature type="short sequence motif" description="Q motif">
    <location>
        <begin position="228"/>
        <end position="256"/>
    </location>
</feature>
<feature type="short sequence motif" description="DEAD box">
    <location>
        <begin position="382"/>
        <end position="385"/>
    </location>
</feature>
<feature type="compositionally biased region" description="Polar residues" evidence="3">
    <location>
        <begin position="14"/>
        <end position="27"/>
    </location>
</feature>
<feature type="compositionally biased region" description="Acidic residues" evidence="3">
    <location>
        <begin position="41"/>
        <end position="64"/>
    </location>
</feature>
<feature type="compositionally biased region" description="Basic and acidic residues" evidence="3">
    <location>
        <begin position="99"/>
        <end position="109"/>
    </location>
</feature>
<feature type="compositionally biased region" description="Basic residues" evidence="3">
    <location>
        <begin position="615"/>
        <end position="628"/>
    </location>
</feature>
<feature type="compositionally biased region" description="Gly residues" evidence="3">
    <location>
        <begin position="629"/>
        <end position="638"/>
    </location>
</feature>
<feature type="compositionally biased region" description="Polar residues" evidence="3">
    <location>
        <begin position="649"/>
        <end position="666"/>
    </location>
</feature>
<feature type="compositionally biased region" description="Gly residues" evidence="3">
    <location>
        <begin position="707"/>
        <end position="716"/>
    </location>
</feature>
<feature type="compositionally biased region" description="Polar residues" evidence="3">
    <location>
        <begin position="718"/>
        <end position="732"/>
    </location>
</feature>
<feature type="compositionally biased region" description="Low complexity" evidence="3">
    <location>
        <begin position="733"/>
        <end position="745"/>
    </location>
</feature>
<feature type="compositionally biased region" description="Basic residues" evidence="3">
    <location>
        <begin position="750"/>
        <end position="760"/>
    </location>
</feature>
<feature type="binding site" evidence="1">
    <location>
        <begin position="272"/>
        <end position="279"/>
    </location>
    <ligand>
        <name>ATP</name>
        <dbReference type="ChEBI" id="CHEBI:30616"/>
    </ligand>
</feature>
<feature type="modified residue" description="Phosphoserine" evidence="5">
    <location>
        <position position="160"/>
    </location>
</feature>
<evidence type="ECO:0000255" key="1">
    <source>
        <dbReference type="PROSITE-ProRule" id="PRU00541"/>
    </source>
</evidence>
<evidence type="ECO:0000255" key="2">
    <source>
        <dbReference type="PROSITE-ProRule" id="PRU00542"/>
    </source>
</evidence>
<evidence type="ECO:0000256" key="3">
    <source>
        <dbReference type="SAM" id="MobiDB-lite"/>
    </source>
</evidence>
<evidence type="ECO:0000305" key="4"/>
<evidence type="ECO:0007744" key="5">
    <source>
    </source>
</evidence>
<gene>
    <name type="primary">RH24</name>
    <name type="ordered locus">At2g47330</name>
    <name type="ORF">T8I13.17</name>
</gene>
<dbReference type="EC" id="3.6.4.13"/>
<dbReference type="EMBL" id="AC002337">
    <property type="protein sequence ID" value="AAB63833.2"/>
    <property type="molecule type" value="Genomic_DNA"/>
</dbReference>
<dbReference type="EMBL" id="CP002685">
    <property type="protein sequence ID" value="AEC10828.1"/>
    <property type="molecule type" value="Genomic_DNA"/>
</dbReference>
<dbReference type="EMBL" id="AY057700">
    <property type="protein sequence ID" value="AAL15330.1"/>
    <property type="molecule type" value="mRNA"/>
</dbReference>
<dbReference type="EMBL" id="AY124871">
    <property type="protein sequence ID" value="AAM70580.1"/>
    <property type="molecule type" value="mRNA"/>
</dbReference>
<dbReference type="PIR" id="H84913">
    <property type="entry name" value="H84913"/>
</dbReference>
<dbReference type="RefSeq" id="NP_566099.1">
    <property type="nucleotide sequence ID" value="NM_130301.5"/>
</dbReference>
<dbReference type="SMR" id="O22907"/>
<dbReference type="FunCoup" id="O22907">
    <property type="interactions" value="4654"/>
</dbReference>
<dbReference type="STRING" id="3702.O22907"/>
<dbReference type="GlyGen" id="O22907">
    <property type="glycosylation" value="1 site"/>
</dbReference>
<dbReference type="iPTMnet" id="O22907"/>
<dbReference type="PaxDb" id="3702-AT2G47330.1"/>
<dbReference type="ProteomicsDB" id="236927"/>
<dbReference type="EnsemblPlants" id="AT2G47330.1">
    <property type="protein sequence ID" value="AT2G47330.1"/>
    <property type="gene ID" value="AT2G47330"/>
</dbReference>
<dbReference type="GeneID" id="819346"/>
<dbReference type="Gramene" id="AT2G47330.1">
    <property type="protein sequence ID" value="AT2G47330.1"/>
    <property type="gene ID" value="AT2G47330"/>
</dbReference>
<dbReference type="KEGG" id="ath:AT2G47330"/>
<dbReference type="Araport" id="AT2G47330"/>
<dbReference type="TAIR" id="AT2G47330"/>
<dbReference type="eggNOG" id="KOG0339">
    <property type="taxonomic scope" value="Eukaryota"/>
</dbReference>
<dbReference type="HOGENOM" id="CLU_003041_9_1_1"/>
<dbReference type="InParanoid" id="O22907"/>
<dbReference type="OMA" id="DHTWEQT"/>
<dbReference type="PhylomeDB" id="O22907"/>
<dbReference type="PRO" id="PR:O22907"/>
<dbReference type="Proteomes" id="UP000006548">
    <property type="component" value="Chromosome 2"/>
</dbReference>
<dbReference type="ExpressionAtlas" id="O22907">
    <property type="expression patterns" value="baseline and differential"/>
</dbReference>
<dbReference type="GO" id="GO:0005524">
    <property type="term" value="F:ATP binding"/>
    <property type="evidence" value="ECO:0007669"/>
    <property type="project" value="UniProtKB-KW"/>
</dbReference>
<dbReference type="GO" id="GO:0016887">
    <property type="term" value="F:ATP hydrolysis activity"/>
    <property type="evidence" value="ECO:0007669"/>
    <property type="project" value="RHEA"/>
</dbReference>
<dbReference type="GO" id="GO:0003723">
    <property type="term" value="F:RNA binding"/>
    <property type="evidence" value="ECO:0007669"/>
    <property type="project" value="UniProtKB-KW"/>
</dbReference>
<dbReference type="GO" id="GO:0003724">
    <property type="term" value="F:RNA helicase activity"/>
    <property type="evidence" value="ECO:0007669"/>
    <property type="project" value="UniProtKB-EC"/>
</dbReference>
<dbReference type="CDD" id="cd17952">
    <property type="entry name" value="DEADc_DDX42"/>
    <property type="match status" value="1"/>
</dbReference>
<dbReference type="CDD" id="cd18787">
    <property type="entry name" value="SF2_C_DEAD"/>
    <property type="match status" value="1"/>
</dbReference>
<dbReference type="FunFam" id="3.40.50.300:FF:000079">
    <property type="entry name" value="probable ATP-dependent RNA helicase DDX17"/>
    <property type="match status" value="1"/>
</dbReference>
<dbReference type="Gene3D" id="3.40.50.300">
    <property type="entry name" value="P-loop containing nucleotide triphosphate hydrolases"/>
    <property type="match status" value="2"/>
</dbReference>
<dbReference type="InterPro" id="IPR011545">
    <property type="entry name" value="DEAD/DEAH_box_helicase_dom"/>
</dbReference>
<dbReference type="InterPro" id="IPR014001">
    <property type="entry name" value="Helicase_ATP-bd"/>
</dbReference>
<dbReference type="InterPro" id="IPR001650">
    <property type="entry name" value="Helicase_C-like"/>
</dbReference>
<dbReference type="InterPro" id="IPR027417">
    <property type="entry name" value="P-loop_NTPase"/>
</dbReference>
<dbReference type="InterPro" id="IPR000629">
    <property type="entry name" value="RNA-helicase_DEAD-box_CS"/>
</dbReference>
<dbReference type="InterPro" id="IPR014014">
    <property type="entry name" value="RNA_helicase_DEAD_Q_motif"/>
</dbReference>
<dbReference type="PANTHER" id="PTHR47958">
    <property type="entry name" value="ATP-DEPENDENT RNA HELICASE DBP3"/>
    <property type="match status" value="1"/>
</dbReference>
<dbReference type="Pfam" id="PF00270">
    <property type="entry name" value="DEAD"/>
    <property type="match status" value="1"/>
</dbReference>
<dbReference type="Pfam" id="PF00271">
    <property type="entry name" value="Helicase_C"/>
    <property type="match status" value="1"/>
</dbReference>
<dbReference type="SMART" id="SM00487">
    <property type="entry name" value="DEXDc"/>
    <property type="match status" value="1"/>
</dbReference>
<dbReference type="SMART" id="SM00490">
    <property type="entry name" value="HELICc"/>
    <property type="match status" value="1"/>
</dbReference>
<dbReference type="SUPFAM" id="SSF52540">
    <property type="entry name" value="P-loop containing nucleoside triphosphate hydrolases"/>
    <property type="match status" value="2"/>
</dbReference>
<dbReference type="PROSITE" id="PS00039">
    <property type="entry name" value="DEAD_ATP_HELICASE"/>
    <property type="match status" value="1"/>
</dbReference>
<dbReference type="PROSITE" id="PS51192">
    <property type="entry name" value="HELICASE_ATP_BIND_1"/>
    <property type="match status" value="1"/>
</dbReference>
<dbReference type="PROSITE" id="PS51194">
    <property type="entry name" value="HELICASE_CTER"/>
    <property type="match status" value="1"/>
</dbReference>
<dbReference type="PROSITE" id="PS51195">
    <property type="entry name" value="Q_MOTIF"/>
    <property type="match status" value="1"/>
</dbReference>
<comment type="catalytic activity">
    <reaction>
        <text>ATP + H2O = ADP + phosphate + H(+)</text>
        <dbReference type="Rhea" id="RHEA:13065"/>
        <dbReference type="ChEBI" id="CHEBI:15377"/>
        <dbReference type="ChEBI" id="CHEBI:15378"/>
        <dbReference type="ChEBI" id="CHEBI:30616"/>
        <dbReference type="ChEBI" id="CHEBI:43474"/>
        <dbReference type="ChEBI" id="CHEBI:456216"/>
        <dbReference type="EC" id="3.6.4.13"/>
    </reaction>
</comment>
<comment type="domain">
    <text>The Q motif is unique to and characteristic of the DEAD box family of RNA helicases and controls ATP binding and hydrolysis.</text>
</comment>
<comment type="similarity">
    <text evidence="4">Belongs to the DEAD box helicase family.</text>
</comment>
<proteinExistence type="evidence at protein level"/>
<name>RH24_ARATH</name>
<sequence>MSNRKFGMEGFGINRQTSYSFERSQAPQRLYVPPSSRGGDNSEDADLDNIDYMENEEAEEDIEEGGSAAASGGEVDEIDPLDAFMEGIHQEMKSAPPPKPKEKLERYKDDDDDPVESYLKAKKDLGLTLAADALNAGYNSDEEVYAAAKAVDAGMLDYDSDDNPIVVDKRKIEPITALDHSSIDYEPINKDFYEELESISGMTEQETTDYRQRLGIRVSGFDVHRPVKTFEDCGFSSQIMSAIKKQAYEKPTAIQCQALPIVLSGRDVIGIAKTGSGKTAAFVLPMIVHIMDQPELQRDEGPIGVICAPTRELAHQIFLEAKKFSKAYGLRVSAVYGGMSKHEQFKELKAGCEIVVATPGRLIDMLKMKALTMMRASYLVLDEADRMFDLGFEPQVRSIVGQIRPDRQTLLFSATMPWKVEKLAREILSDPIRVTVGEVGMANEDITQVVNVIPSDAEKLPWLLEKLPGMIDEGDVLVFASKKATVDEIEAQLTLNSFKVAALHGDKDQASRMETLQKFKSGVHHVLIATDVAARGLDIKSLKTVVNYDIAKDMDMHVHRIGRTGRAGDRDGVAYTLVTQREARFAGELVNSLVAAGQNVPPELTDLAMKDGRFKSKRDGRKGGKKGRGGGGGNKGVRGVDFGLGIGFSSESSRTPSSKAAPSRSGAINSVRTGVMAQFKNSFVAATPSNPQNQAYPNKRPSLMGFVSGGTIGGDMGRTQSQAPPVAPTQNASSHNSSQNHSQSSENRPRERKRRSGWDN</sequence>
<accession>O22907</accession>
<accession>Q93Z98</accession>
<organism>
    <name type="scientific">Arabidopsis thaliana</name>
    <name type="common">Mouse-ear cress</name>
    <dbReference type="NCBI Taxonomy" id="3702"/>
    <lineage>
        <taxon>Eukaryota</taxon>
        <taxon>Viridiplantae</taxon>
        <taxon>Streptophyta</taxon>
        <taxon>Embryophyta</taxon>
        <taxon>Tracheophyta</taxon>
        <taxon>Spermatophyta</taxon>
        <taxon>Magnoliopsida</taxon>
        <taxon>eudicotyledons</taxon>
        <taxon>Gunneridae</taxon>
        <taxon>Pentapetalae</taxon>
        <taxon>rosids</taxon>
        <taxon>malvids</taxon>
        <taxon>Brassicales</taxon>
        <taxon>Brassicaceae</taxon>
        <taxon>Camelineae</taxon>
        <taxon>Arabidopsis</taxon>
    </lineage>
</organism>
<protein>
    <recommendedName>
        <fullName>DEAD-box ATP-dependent RNA helicase 24</fullName>
        <ecNumber>3.6.4.13</ecNumber>
    </recommendedName>
</protein>